<keyword id="KW-0929">Antimicrobial</keyword>
<keyword id="KW-0903">Direct protein sequencing</keyword>
<keyword id="KW-0295">Fungicide</keyword>
<comment type="function">
    <text evidence="1">Has antifungal activity against B.cinerea. Inhibits HIV-1 reverse transcriptase.</text>
</comment>
<comment type="miscellaneous">
    <text>Inhibits HIV-1 reverse transcriptase with an IC(50) of 10 uM.</text>
</comment>
<evidence type="ECO:0000269" key="1">
    <source>
    </source>
</evidence>
<evidence type="ECO:0000303" key="2">
    <source>
    </source>
</evidence>
<evidence type="ECO:0000305" key="3"/>
<sequence>YQCGQGG</sequence>
<dbReference type="GO" id="GO:0050832">
    <property type="term" value="P:defense response to fungus"/>
    <property type="evidence" value="ECO:0007669"/>
    <property type="project" value="UniProtKB-KW"/>
</dbReference>
<dbReference type="GO" id="GO:0031640">
    <property type="term" value="P:killing of cells of another organism"/>
    <property type="evidence" value="ECO:0007669"/>
    <property type="project" value="UniProtKB-KW"/>
</dbReference>
<reference evidence="3" key="1">
    <citation type="journal article" date="2002" name="Peptides">
        <title>Ascalin, a new anti-fungal peptide with human immunodeficiency virus type 1 reverse transcriptase-inhibiting activity from shallot bulbs.</title>
        <authorList>
            <person name="Wang H.X."/>
            <person name="Ng T.B."/>
        </authorList>
    </citation>
    <scope>PROTEIN SEQUENCE</scope>
    <scope>FUNCTION</scope>
    <source>
        <tissue evidence="1">Bulb</tissue>
    </source>
</reference>
<organism>
    <name type="scientific">Allium cepa var. aggregatum</name>
    <name type="common">Shallot</name>
    <name type="synonym">Allium ascalonicum</name>
    <dbReference type="NCBI Taxonomy" id="28911"/>
    <lineage>
        <taxon>Eukaryota</taxon>
        <taxon>Viridiplantae</taxon>
        <taxon>Streptophyta</taxon>
        <taxon>Embryophyta</taxon>
        <taxon>Tracheophyta</taxon>
        <taxon>Spermatophyta</taxon>
        <taxon>Magnoliopsida</taxon>
        <taxon>Liliopsida</taxon>
        <taxon>Asparagales</taxon>
        <taxon>Amaryllidaceae</taxon>
        <taxon>Allioideae</taxon>
        <taxon>Allieae</taxon>
        <taxon>Allium</taxon>
    </lineage>
</organism>
<accession>P84071</accession>
<feature type="peptide" id="PRO_0000045090" description="Ascalin">
    <location>
        <begin position="1"/>
        <end position="7" status="greater than"/>
    </location>
</feature>
<feature type="non-terminal residue" evidence="2">
    <location>
        <position position="7"/>
    </location>
</feature>
<protein>
    <recommendedName>
        <fullName>Ascalin</fullName>
    </recommendedName>
</protein>
<proteinExistence type="evidence at protein level"/>
<name>ASCL_ALLCG</name>